<reference key="1">
    <citation type="journal article" date="2004" name="Nucleic Acids Res.">
        <title>Thermoadaptation trait revealed by the genome sequence of thermophilic Geobacillus kaustophilus.</title>
        <authorList>
            <person name="Takami H."/>
            <person name="Takaki Y."/>
            <person name="Chee G.-J."/>
            <person name="Nishi S."/>
            <person name="Shimamura S."/>
            <person name="Suzuki H."/>
            <person name="Matsui S."/>
            <person name="Uchiyama I."/>
        </authorList>
    </citation>
    <scope>NUCLEOTIDE SEQUENCE [LARGE SCALE GENOMIC DNA]</scope>
    <source>
        <strain>HTA426</strain>
    </source>
</reference>
<proteinExistence type="inferred from homology"/>
<accession>Q5KUD7</accession>
<keyword id="KW-0012">Acyltransferase</keyword>
<keyword id="KW-1185">Reference proteome</keyword>
<keyword id="KW-0808">Transferase</keyword>
<sequence>MSHELLRQPKWRVIDQSHFGPLFDAKQSFAIDDALCTAVGAGQSDAVVRTWVHENTVVLGAADTKLPYIDEAISFLRQEGYRVVVRNSGGLAVVLDSGVLNISLIFPETKNTIAIEQGYEAMYALMAAMLASYGARVEAGEIVGSYCPGSYDLSIGGKKFAGISQRRVRGGVAVQIYLCVNGSGAARAELIRRFYELGRQGEKTKFAYPDVVPTVMASLSELLGCELSIDELLVALWRTLQSFGGELYSSALENGEWNWYEQYWARIVERNETALKGELLAGE</sequence>
<dbReference type="EC" id="2.3.1.204" evidence="1"/>
<dbReference type="EMBL" id="BA000043">
    <property type="protein sequence ID" value="BAD77699.1"/>
    <property type="molecule type" value="Genomic_DNA"/>
</dbReference>
<dbReference type="RefSeq" id="WP_011232881.1">
    <property type="nucleotide sequence ID" value="NC_006510.1"/>
</dbReference>
<dbReference type="SMR" id="Q5KUD7"/>
<dbReference type="STRING" id="235909.GK3414"/>
<dbReference type="KEGG" id="gka:GK3414"/>
<dbReference type="eggNOG" id="COG0095">
    <property type="taxonomic scope" value="Bacteria"/>
</dbReference>
<dbReference type="HOGENOM" id="CLU_067270_0_0_9"/>
<dbReference type="Proteomes" id="UP000001172">
    <property type="component" value="Chromosome"/>
</dbReference>
<dbReference type="GO" id="GO:0033819">
    <property type="term" value="F:lipoyl(octanoyl) transferase activity"/>
    <property type="evidence" value="ECO:0007669"/>
    <property type="project" value="InterPro"/>
</dbReference>
<dbReference type="GO" id="GO:0009107">
    <property type="term" value="P:lipoate biosynthetic process"/>
    <property type="evidence" value="ECO:0007669"/>
    <property type="project" value="UniProtKB-UniRule"/>
</dbReference>
<dbReference type="GO" id="GO:0036211">
    <property type="term" value="P:protein modification process"/>
    <property type="evidence" value="ECO:0007669"/>
    <property type="project" value="InterPro"/>
</dbReference>
<dbReference type="CDD" id="cd16443">
    <property type="entry name" value="LplA"/>
    <property type="match status" value="1"/>
</dbReference>
<dbReference type="Gene3D" id="3.30.930.10">
    <property type="entry name" value="Bira Bifunctional Protein, Domain 2"/>
    <property type="match status" value="1"/>
</dbReference>
<dbReference type="HAMAP" id="MF_02119">
    <property type="entry name" value="LipL"/>
    <property type="match status" value="1"/>
</dbReference>
<dbReference type="InterPro" id="IPR045864">
    <property type="entry name" value="aa-tRNA-synth_II/BPL/LPL"/>
</dbReference>
<dbReference type="InterPro" id="IPR004143">
    <property type="entry name" value="BPL_LPL_catalytic"/>
</dbReference>
<dbReference type="InterPro" id="IPR024897">
    <property type="entry name" value="LipL"/>
</dbReference>
<dbReference type="InterPro" id="IPR050664">
    <property type="entry name" value="Octanoyltrans_LipM/LipL"/>
</dbReference>
<dbReference type="PANTHER" id="PTHR43679:SF2">
    <property type="entry name" value="OCTANOYL-[GCVH]:PROTEIN N-OCTANOYLTRANSFERASE"/>
    <property type="match status" value="1"/>
</dbReference>
<dbReference type="PANTHER" id="PTHR43679">
    <property type="entry name" value="OCTANOYLTRANSFERASE LIPM-RELATED"/>
    <property type="match status" value="1"/>
</dbReference>
<dbReference type="Pfam" id="PF21948">
    <property type="entry name" value="LplA-B_cat"/>
    <property type="match status" value="1"/>
</dbReference>
<dbReference type="SUPFAM" id="SSF55681">
    <property type="entry name" value="Class II aaRS and biotin synthetases"/>
    <property type="match status" value="1"/>
</dbReference>
<dbReference type="PROSITE" id="PS51733">
    <property type="entry name" value="BPL_LPL_CATALYTIC"/>
    <property type="match status" value="1"/>
</dbReference>
<organism>
    <name type="scientific">Geobacillus kaustophilus (strain HTA426)</name>
    <dbReference type="NCBI Taxonomy" id="235909"/>
    <lineage>
        <taxon>Bacteria</taxon>
        <taxon>Bacillati</taxon>
        <taxon>Bacillota</taxon>
        <taxon>Bacilli</taxon>
        <taxon>Bacillales</taxon>
        <taxon>Anoxybacillaceae</taxon>
        <taxon>Geobacillus</taxon>
        <taxon>Geobacillus thermoleovorans group</taxon>
    </lineage>
</organism>
<gene>
    <name evidence="1" type="primary">lipL</name>
    <name type="ordered locus">GK3414</name>
</gene>
<name>LIPL_GEOKA</name>
<comment type="function">
    <text evidence="1">Catalyzes the amidotransfer (transamidation) of the octanoyl moiety from octanoyl-GcvH to the lipoyl domain of the E2 subunit of lipoate-dependent enzymes.</text>
</comment>
<comment type="catalytic activity">
    <reaction evidence="1">
        <text>N(6)-octanoyl-L-lysyl-[glycine-cleavage complex H protein] + L-lysyl-[lipoyl-carrier protein] = N(6)-octanoyl-L-lysyl-[lipoyl-carrier protein] + L-lysyl-[glycine-cleavage complex H protein]</text>
        <dbReference type="Rhea" id="RHEA:20213"/>
        <dbReference type="Rhea" id="RHEA-COMP:10500"/>
        <dbReference type="Rhea" id="RHEA-COMP:10501"/>
        <dbReference type="Rhea" id="RHEA-COMP:10503"/>
        <dbReference type="Rhea" id="RHEA-COMP:10504"/>
        <dbReference type="ChEBI" id="CHEBI:29969"/>
        <dbReference type="ChEBI" id="CHEBI:78809"/>
        <dbReference type="EC" id="2.3.1.204"/>
    </reaction>
</comment>
<comment type="pathway">
    <text evidence="1">Protein modification; protein lipoylation via endogenous pathway; protein N(6)-(lipoyl)lysine from octanoyl-[acyl-carrier-protein].</text>
</comment>
<comment type="miscellaneous">
    <text evidence="1">The reaction proceeds via a thioester-linked acyl-enzyme intermediate.</text>
</comment>
<comment type="similarity">
    <text evidence="1">Belongs to the octanoyltransferase LipL family.</text>
</comment>
<feature type="chain" id="PRO_0000410841" description="Octanoyl-[GcvH]:protein N-octanoyltransferase">
    <location>
        <begin position="1"/>
        <end position="283"/>
    </location>
</feature>
<feature type="domain" description="BPL/LPL catalytic" evidence="2">
    <location>
        <begin position="42"/>
        <end position="248"/>
    </location>
</feature>
<feature type="active site" description="Acyl-thioester intermediate" evidence="1">
    <location>
        <position position="147"/>
    </location>
</feature>
<feature type="site" description="Lowers pKa of active site Cys" evidence="1">
    <location>
        <position position="159"/>
    </location>
</feature>
<protein>
    <recommendedName>
        <fullName evidence="1">Octanoyl-[GcvH]:protein N-octanoyltransferase</fullName>
        <ecNumber evidence="1">2.3.1.204</ecNumber>
    </recommendedName>
    <alternativeName>
        <fullName evidence="1">Octanoyl-[GcvH]:E2 amidotransferase</fullName>
    </alternativeName>
</protein>
<evidence type="ECO:0000255" key="1">
    <source>
        <dbReference type="HAMAP-Rule" id="MF_02119"/>
    </source>
</evidence>
<evidence type="ECO:0000255" key="2">
    <source>
        <dbReference type="PROSITE-ProRule" id="PRU01067"/>
    </source>
</evidence>